<protein>
    <recommendedName>
        <fullName>DNA repair protein RAD51</fullName>
    </recommendedName>
</protein>
<accession>Q99133</accession>
<accession>A0A0D1CQ09</accession>
<accession>Q4P9C3</accession>
<organism>
    <name type="scientific">Mycosarcoma maydis</name>
    <name type="common">Corn smut fungus</name>
    <name type="synonym">Ustilago maydis</name>
    <dbReference type="NCBI Taxonomy" id="5270"/>
    <lineage>
        <taxon>Eukaryota</taxon>
        <taxon>Fungi</taxon>
        <taxon>Dikarya</taxon>
        <taxon>Basidiomycota</taxon>
        <taxon>Ustilaginomycotina</taxon>
        <taxon>Ustilaginomycetes</taxon>
        <taxon>Ustilaginales</taxon>
        <taxon>Ustilaginaceae</taxon>
        <taxon>Mycosarcoma</taxon>
    </lineage>
</organism>
<evidence type="ECO:0000250" key="1"/>
<evidence type="ECO:0000255" key="2"/>
<evidence type="ECO:0000256" key="3">
    <source>
        <dbReference type="SAM" id="MobiDB-lite"/>
    </source>
</evidence>
<evidence type="ECO:0000305" key="4"/>
<name>RAD51_MYCMD</name>
<reference key="1">
    <citation type="journal article" date="1997" name="Genetics">
        <title>Interaction between Ustilago maydis REC2 and RAD51 genes in DNA repair and mitotic recombination.</title>
        <authorList>
            <person name="Ferguson D.O."/>
            <person name="Rice M.C."/>
            <person name="Rendi M.H."/>
            <person name="Kotani H."/>
            <person name="Kmiec E.B."/>
            <person name="Holloman W.K."/>
        </authorList>
    </citation>
    <scope>NUCLEOTIDE SEQUENCE [GENOMIC DNA]</scope>
</reference>
<reference key="2">
    <citation type="journal article" date="2006" name="Nature">
        <title>Insights from the genome of the biotrophic fungal plant pathogen Ustilago maydis.</title>
        <authorList>
            <person name="Kaemper J."/>
            <person name="Kahmann R."/>
            <person name="Boelker M."/>
            <person name="Ma L.-J."/>
            <person name="Brefort T."/>
            <person name="Saville B.J."/>
            <person name="Banuett F."/>
            <person name="Kronstad J.W."/>
            <person name="Gold S.E."/>
            <person name="Mueller O."/>
            <person name="Perlin M.H."/>
            <person name="Woesten H.A.B."/>
            <person name="de Vries R."/>
            <person name="Ruiz-Herrera J."/>
            <person name="Reynaga-Pena C.G."/>
            <person name="Snetselaar K."/>
            <person name="McCann M."/>
            <person name="Perez-Martin J."/>
            <person name="Feldbruegge M."/>
            <person name="Basse C.W."/>
            <person name="Steinberg G."/>
            <person name="Ibeas J.I."/>
            <person name="Holloman W."/>
            <person name="Guzman P."/>
            <person name="Farman M.L."/>
            <person name="Stajich J.E."/>
            <person name="Sentandreu R."/>
            <person name="Gonzalez-Prieto J.M."/>
            <person name="Kennell J.C."/>
            <person name="Molina L."/>
            <person name="Schirawski J."/>
            <person name="Mendoza-Mendoza A."/>
            <person name="Greilinger D."/>
            <person name="Muench K."/>
            <person name="Roessel N."/>
            <person name="Scherer M."/>
            <person name="Vranes M."/>
            <person name="Ladendorf O."/>
            <person name="Vincon V."/>
            <person name="Fuchs U."/>
            <person name="Sandrock B."/>
            <person name="Meng S."/>
            <person name="Ho E.C.H."/>
            <person name="Cahill M.J."/>
            <person name="Boyce K.J."/>
            <person name="Klose J."/>
            <person name="Klosterman S.J."/>
            <person name="Deelstra H.J."/>
            <person name="Ortiz-Castellanos L."/>
            <person name="Li W."/>
            <person name="Sanchez-Alonso P."/>
            <person name="Schreier P.H."/>
            <person name="Haeuser-Hahn I."/>
            <person name="Vaupel M."/>
            <person name="Koopmann E."/>
            <person name="Friedrich G."/>
            <person name="Voss H."/>
            <person name="Schlueter T."/>
            <person name="Margolis J."/>
            <person name="Platt D."/>
            <person name="Swimmer C."/>
            <person name="Gnirke A."/>
            <person name="Chen F."/>
            <person name="Vysotskaia V."/>
            <person name="Mannhaupt G."/>
            <person name="Gueldener U."/>
            <person name="Muensterkoetter M."/>
            <person name="Haase D."/>
            <person name="Oesterheld M."/>
            <person name="Mewes H.-W."/>
            <person name="Mauceli E.W."/>
            <person name="DeCaprio D."/>
            <person name="Wade C.M."/>
            <person name="Butler J."/>
            <person name="Young S.K."/>
            <person name="Jaffe D.B."/>
            <person name="Calvo S.E."/>
            <person name="Nusbaum C."/>
            <person name="Galagan J.E."/>
            <person name="Birren B.W."/>
        </authorList>
    </citation>
    <scope>NUCLEOTIDE SEQUENCE [LARGE SCALE GENOMIC DNA]</scope>
    <source>
        <strain>DSM 14603 / FGSC 9021 / UM521</strain>
    </source>
</reference>
<reference key="3">
    <citation type="submission" date="2014-09" db="EMBL/GenBank/DDBJ databases">
        <authorList>
            <person name="Gueldener U."/>
            <person name="Muensterkoetter M."/>
            <person name="Walter M.C."/>
            <person name="Mannhaupt G."/>
            <person name="Kahmann R."/>
        </authorList>
    </citation>
    <scope>GENOME REANNOTATION</scope>
    <source>
        <strain>DSM 14603 / FGSC 9021 / UM521</strain>
    </source>
</reference>
<sequence>MSQNAQDPAQIGEDDMGEAFGPLPVSKLEEFGISSSDCKKLAESGYNTVESIAFTPKKQLLLVKGVSEAKADKILAEAARLVPMGFTTATEFHARRNELISITTGSKNLDAILGGGMETGSITELYGEFRTGKSQLCHTLAVTCQLPVDMGGGEGKCLYIDTENTFRPTRLLAVAERFGLNGEEVLDNVAYARAYNADHQLQLLMQASAMMAESRFSLLIVDSLTSLYRTDFSGRGELSARQMHLAKFLRGLMRLADEFGVAVVITNQVVAQVDGATAFTADAKKPIGGNIVAHASTTRLSLRKGRGNQRICRIADSPCLPEADAVFAIGPEGIIDPVD</sequence>
<keyword id="KW-0067">ATP-binding</keyword>
<keyword id="KW-0227">DNA damage</keyword>
<keyword id="KW-0233">DNA recombination</keyword>
<keyword id="KW-0234">DNA repair</keyword>
<keyword id="KW-0547">Nucleotide-binding</keyword>
<keyword id="KW-0539">Nucleus</keyword>
<keyword id="KW-1185">Reference proteome</keyword>
<comment type="function">
    <text evidence="1">Required both for recombination and for the repair of DNA damage caused by X-rays.</text>
</comment>
<comment type="subcellular location">
    <subcellularLocation>
        <location evidence="4">Nucleus</location>
    </subcellularLocation>
</comment>
<comment type="similarity">
    <text evidence="4">Belongs to the RecA family. RAD51 subfamily.</text>
</comment>
<proteinExistence type="inferred from homology"/>
<dbReference type="EMBL" id="U62484">
    <property type="protein sequence ID" value="AAC61878.1"/>
    <property type="molecule type" value="Genomic_DNA"/>
</dbReference>
<dbReference type="EMBL" id="CM003147">
    <property type="protein sequence ID" value="KIS68723.1"/>
    <property type="molecule type" value="Genomic_DNA"/>
</dbReference>
<dbReference type="RefSeq" id="XP_011389700.1">
    <property type="nucleotide sequence ID" value="XM_011391398.1"/>
</dbReference>
<dbReference type="SMR" id="Q99133"/>
<dbReference type="BioGRID" id="1961459">
    <property type="interactions" value="1"/>
</dbReference>
<dbReference type="FunCoup" id="Q99133">
    <property type="interactions" value="403"/>
</dbReference>
<dbReference type="STRING" id="237631.Q99133"/>
<dbReference type="EnsemblFungi" id="KIS68723">
    <property type="protein sequence ID" value="KIS68723"/>
    <property type="gene ID" value="UMAG_03290"/>
</dbReference>
<dbReference type="GeneID" id="23563788"/>
<dbReference type="KEGG" id="uma:UMAG_03290"/>
<dbReference type="VEuPathDB" id="FungiDB:UMAG_03290"/>
<dbReference type="eggNOG" id="KOG1433">
    <property type="taxonomic scope" value="Eukaryota"/>
</dbReference>
<dbReference type="HOGENOM" id="CLU_041732_0_2_1"/>
<dbReference type="InParanoid" id="Q99133"/>
<dbReference type="OMA" id="RAYNSNH"/>
<dbReference type="OrthoDB" id="10251254at2759"/>
<dbReference type="Proteomes" id="UP000000561">
    <property type="component" value="Chromosome 8"/>
</dbReference>
<dbReference type="GO" id="GO:0000775">
    <property type="term" value="C:chromosome, centromeric region"/>
    <property type="evidence" value="ECO:0007669"/>
    <property type="project" value="EnsemblFungi"/>
</dbReference>
<dbReference type="GO" id="GO:0000794">
    <property type="term" value="C:condensed nuclear chromosome"/>
    <property type="evidence" value="ECO:0000318"/>
    <property type="project" value="GO_Central"/>
</dbReference>
<dbReference type="GO" id="GO:0000262">
    <property type="term" value="C:mitochondrial chromosome"/>
    <property type="evidence" value="ECO:0007669"/>
    <property type="project" value="EnsemblFungi"/>
</dbReference>
<dbReference type="GO" id="GO:0035861">
    <property type="term" value="C:site of double-strand break"/>
    <property type="evidence" value="ECO:0007669"/>
    <property type="project" value="EnsemblFungi"/>
</dbReference>
<dbReference type="GO" id="GO:0005524">
    <property type="term" value="F:ATP binding"/>
    <property type="evidence" value="ECO:0007669"/>
    <property type="project" value="UniProtKB-KW"/>
</dbReference>
<dbReference type="GO" id="GO:0016887">
    <property type="term" value="F:ATP hydrolysis activity"/>
    <property type="evidence" value="ECO:0007669"/>
    <property type="project" value="InterPro"/>
</dbReference>
<dbReference type="GO" id="GO:0008094">
    <property type="term" value="F:ATP-dependent activity, acting on DNA"/>
    <property type="evidence" value="ECO:0000318"/>
    <property type="project" value="GO_Central"/>
</dbReference>
<dbReference type="GO" id="GO:0140664">
    <property type="term" value="F:ATP-dependent DNA damage sensor activity"/>
    <property type="evidence" value="ECO:0007669"/>
    <property type="project" value="InterPro"/>
</dbReference>
<dbReference type="GO" id="GO:0000150">
    <property type="term" value="F:DNA strand exchange activity"/>
    <property type="evidence" value="ECO:0000318"/>
    <property type="project" value="GO_Central"/>
</dbReference>
<dbReference type="GO" id="GO:0003690">
    <property type="term" value="F:double-stranded DNA binding"/>
    <property type="evidence" value="ECO:0000318"/>
    <property type="project" value="GO_Central"/>
</dbReference>
<dbReference type="GO" id="GO:0042802">
    <property type="term" value="F:identical protein binding"/>
    <property type="evidence" value="ECO:0007669"/>
    <property type="project" value="EnsemblFungi"/>
</dbReference>
<dbReference type="GO" id="GO:0003697">
    <property type="term" value="F:single-stranded DNA binding"/>
    <property type="evidence" value="ECO:0000318"/>
    <property type="project" value="GO_Central"/>
</dbReference>
<dbReference type="GO" id="GO:1905334">
    <property type="term" value="F:Swi5-Sfr1 complex binding"/>
    <property type="evidence" value="ECO:0007669"/>
    <property type="project" value="EnsemblFungi"/>
</dbReference>
<dbReference type="GO" id="GO:0070192">
    <property type="term" value="P:chromosome organization involved in meiotic cell cycle"/>
    <property type="evidence" value="ECO:0000318"/>
    <property type="project" value="GO_Central"/>
</dbReference>
<dbReference type="GO" id="GO:0000730">
    <property type="term" value="P:DNA recombinase assembly"/>
    <property type="evidence" value="ECO:0000318"/>
    <property type="project" value="GO_Central"/>
</dbReference>
<dbReference type="GO" id="GO:0042148">
    <property type="term" value="P:DNA strand invasion"/>
    <property type="evidence" value="ECO:0000318"/>
    <property type="project" value="GO_Central"/>
</dbReference>
<dbReference type="GO" id="GO:1990918">
    <property type="term" value="P:double-strand break repair involved in meiotic recombination"/>
    <property type="evidence" value="ECO:0007669"/>
    <property type="project" value="EnsemblFungi"/>
</dbReference>
<dbReference type="GO" id="GO:0000086">
    <property type="term" value="P:G2/M transition of mitotic cell cycle"/>
    <property type="evidence" value="ECO:0007669"/>
    <property type="project" value="EnsemblFungi"/>
</dbReference>
<dbReference type="GO" id="GO:0030491">
    <property type="term" value="P:heteroduplex formation"/>
    <property type="evidence" value="ECO:0007669"/>
    <property type="project" value="EnsemblFungi"/>
</dbReference>
<dbReference type="GO" id="GO:0007533">
    <property type="term" value="P:mating type switching"/>
    <property type="evidence" value="ECO:0007669"/>
    <property type="project" value="EnsemblFungi"/>
</dbReference>
<dbReference type="GO" id="GO:0000709">
    <property type="term" value="P:meiotic joint molecule formation"/>
    <property type="evidence" value="ECO:0007669"/>
    <property type="project" value="EnsemblFungi"/>
</dbReference>
<dbReference type="GO" id="GO:0000708">
    <property type="term" value="P:meiotic strand invasion"/>
    <property type="evidence" value="ECO:0007669"/>
    <property type="project" value="EnsemblFungi"/>
</dbReference>
<dbReference type="GO" id="GO:0043504">
    <property type="term" value="P:mitochondrial DNA repair"/>
    <property type="evidence" value="ECO:0007669"/>
    <property type="project" value="EnsemblFungi"/>
</dbReference>
<dbReference type="GO" id="GO:0006312">
    <property type="term" value="P:mitotic recombination"/>
    <property type="evidence" value="ECO:0000318"/>
    <property type="project" value="GO_Central"/>
</dbReference>
<dbReference type="GO" id="GO:1990426">
    <property type="term" value="P:mitotic recombination-dependent replication fork processing"/>
    <property type="evidence" value="ECO:0007669"/>
    <property type="project" value="EnsemblFungi"/>
</dbReference>
<dbReference type="GO" id="GO:0006289">
    <property type="term" value="P:nucleotide-excision repair"/>
    <property type="evidence" value="ECO:0007669"/>
    <property type="project" value="EnsemblFungi"/>
</dbReference>
<dbReference type="GO" id="GO:0051260">
    <property type="term" value="P:protein homooligomerization"/>
    <property type="evidence" value="ECO:0007669"/>
    <property type="project" value="EnsemblFungi"/>
</dbReference>
<dbReference type="GO" id="GO:0007131">
    <property type="term" value="P:reciprocal meiotic recombination"/>
    <property type="evidence" value="ECO:0000318"/>
    <property type="project" value="GO_Central"/>
</dbReference>
<dbReference type="GO" id="GO:0036298">
    <property type="term" value="P:recombinational interstrand cross-link repair"/>
    <property type="evidence" value="ECO:0007669"/>
    <property type="project" value="EnsemblFungi"/>
</dbReference>
<dbReference type="GO" id="GO:0120290">
    <property type="term" value="P:stalled replication fork localization to nuclear periphery"/>
    <property type="evidence" value="ECO:0007669"/>
    <property type="project" value="EnsemblFungi"/>
</dbReference>
<dbReference type="GO" id="GO:0000722">
    <property type="term" value="P:telomere maintenance via recombination"/>
    <property type="evidence" value="ECO:0007669"/>
    <property type="project" value="EnsemblFungi"/>
</dbReference>
<dbReference type="CDD" id="cd19513">
    <property type="entry name" value="Rad51"/>
    <property type="match status" value="1"/>
</dbReference>
<dbReference type="FunFam" id="1.10.150.20:FF:000008">
    <property type="entry name" value="DNA repair protein RAD51 homolog"/>
    <property type="match status" value="1"/>
</dbReference>
<dbReference type="FunFam" id="3.40.50.300:FF:000092">
    <property type="entry name" value="DNA repair protein Rad51 homolog"/>
    <property type="match status" value="1"/>
</dbReference>
<dbReference type="Gene3D" id="1.10.150.20">
    <property type="entry name" value="5' to 3' exonuclease, C-terminal subdomain"/>
    <property type="match status" value="1"/>
</dbReference>
<dbReference type="Gene3D" id="3.40.50.300">
    <property type="entry name" value="P-loop containing nucleotide triphosphate hydrolases"/>
    <property type="match status" value="1"/>
</dbReference>
<dbReference type="InterPro" id="IPR003593">
    <property type="entry name" value="AAA+_ATPase"/>
</dbReference>
<dbReference type="InterPro" id="IPR011941">
    <property type="entry name" value="DNA_recomb/repair_Rad51"/>
</dbReference>
<dbReference type="InterPro" id="IPR013632">
    <property type="entry name" value="DNA_recomb/repair_Rad51_C"/>
</dbReference>
<dbReference type="InterPro" id="IPR016467">
    <property type="entry name" value="DNA_recomb/repair_RecA-like"/>
</dbReference>
<dbReference type="InterPro" id="IPR010995">
    <property type="entry name" value="DNA_repair_Rad51/TF_NusA_a-hlx"/>
</dbReference>
<dbReference type="InterPro" id="IPR027417">
    <property type="entry name" value="P-loop_NTPase"/>
</dbReference>
<dbReference type="InterPro" id="IPR020588">
    <property type="entry name" value="RecA_ATP-bd"/>
</dbReference>
<dbReference type="InterPro" id="IPR020587">
    <property type="entry name" value="RecA_monomer-monomer_interface"/>
</dbReference>
<dbReference type="NCBIfam" id="NF003301">
    <property type="entry name" value="PRK04301.1"/>
    <property type="match status" value="1"/>
</dbReference>
<dbReference type="NCBIfam" id="TIGR02239">
    <property type="entry name" value="recomb_RAD51"/>
    <property type="match status" value="1"/>
</dbReference>
<dbReference type="PANTHER" id="PTHR22942:SF39">
    <property type="entry name" value="DNA REPAIR PROTEIN RAD51 HOMOLOG 1"/>
    <property type="match status" value="1"/>
</dbReference>
<dbReference type="PANTHER" id="PTHR22942">
    <property type="entry name" value="RECA/RAD51/RADA DNA STRAND-PAIRING FAMILY MEMBER"/>
    <property type="match status" value="1"/>
</dbReference>
<dbReference type="Pfam" id="PF14520">
    <property type="entry name" value="HHH_5"/>
    <property type="match status" value="1"/>
</dbReference>
<dbReference type="Pfam" id="PF08423">
    <property type="entry name" value="Rad51"/>
    <property type="match status" value="1"/>
</dbReference>
<dbReference type="PIRSF" id="PIRSF005856">
    <property type="entry name" value="Rad51"/>
    <property type="match status" value="1"/>
</dbReference>
<dbReference type="SMART" id="SM00382">
    <property type="entry name" value="AAA"/>
    <property type="match status" value="1"/>
</dbReference>
<dbReference type="SUPFAM" id="SSF52540">
    <property type="entry name" value="P-loop containing nucleoside triphosphate hydrolases"/>
    <property type="match status" value="1"/>
</dbReference>
<dbReference type="SUPFAM" id="SSF47794">
    <property type="entry name" value="Rad51 N-terminal domain-like"/>
    <property type="match status" value="1"/>
</dbReference>
<dbReference type="PROSITE" id="PS50162">
    <property type="entry name" value="RECA_2"/>
    <property type="match status" value="1"/>
</dbReference>
<dbReference type="PROSITE" id="PS50163">
    <property type="entry name" value="RECA_3"/>
    <property type="match status" value="1"/>
</dbReference>
<gene>
    <name type="primary">RAD51</name>
    <name type="ORF">UMAG_03290</name>
</gene>
<feature type="chain" id="PRO_0000122923" description="DNA repair protein RAD51">
    <location>
        <begin position="1"/>
        <end position="339"/>
    </location>
</feature>
<feature type="region of interest" description="Disordered" evidence="3">
    <location>
        <begin position="1"/>
        <end position="21"/>
    </location>
</feature>
<feature type="binding site" evidence="2">
    <location>
        <begin position="127"/>
        <end position="134"/>
    </location>
    <ligand>
        <name>ATP</name>
        <dbReference type="ChEBI" id="CHEBI:30616"/>
    </ligand>
</feature>